<reference key="1">
    <citation type="journal article" date="1991" name="New Biol.">
        <title>Recombination and modular exchange in the genesis of new lambdoid phages.</title>
        <authorList>
            <person name="Baker J."/>
            <person name="Limberger R."/>
            <person name="Schneider S.J."/>
            <person name="Campbell A."/>
        </authorList>
    </citation>
    <scope>NUCLEOTIDE SEQUENCE [GENOMIC DNA]</scope>
</reference>
<reference key="2">
    <citation type="journal article" date="1987" name="Gene">
        <title>Functional elements of DNA upstream from the integrase operon that are conserved in bacteriophages 434 and lambda.</title>
        <authorList>
            <person name="Limberger R.J."/>
            <person name="Campbell A.M."/>
        </authorList>
    </citation>
    <scope>NUCLEOTIDE SEQUENCE [GENOMIC DNA] OF 1-64</scope>
</reference>
<protein>
    <recommendedName>
        <fullName>Excisionase</fullName>
    </recommendedName>
</protein>
<organism>
    <name type="scientific">Enterobacteria phage 434</name>
    <name type="common">Bacteriophage 434</name>
    <dbReference type="NCBI Taxonomy" id="10712"/>
    <lineage>
        <taxon>Viruses</taxon>
        <taxon>Duplodnaviria</taxon>
        <taxon>Heunggongvirae</taxon>
        <taxon>Uroviricota</taxon>
        <taxon>Caudoviricetes</taxon>
        <taxon>Lambdavirus</taxon>
        <taxon>Lambdavirus lambda</taxon>
    </lineage>
</organism>
<sequence>MYLTLQEWNARQRRPRSLETVRRWVRECRIFPPPVKDGREYLFHESAVKVDLNRPVTGSLLKRIRNGKKAKS</sequence>
<dbReference type="EMBL" id="M60848">
    <property type="protein sequence ID" value="AAA67901.1"/>
    <property type="molecule type" value="Genomic_DNA"/>
</dbReference>
<dbReference type="BMRB" id="P68926"/>
<dbReference type="SMR" id="P68926"/>
<dbReference type="MINT" id="P68926"/>
<dbReference type="GO" id="GO:0003677">
    <property type="term" value="F:DNA binding"/>
    <property type="evidence" value="ECO:0007669"/>
    <property type="project" value="UniProtKB-KW"/>
</dbReference>
<dbReference type="GO" id="GO:0006310">
    <property type="term" value="P:DNA recombination"/>
    <property type="evidence" value="ECO:0007669"/>
    <property type="project" value="UniProtKB-KW"/>
</dbReference>
<dbReference type="GO" id="GO:0032359">
    <property type="term" value="P:provirus excision"/>
    <property type="evidence" value="ECO:0007669"/>
    <property type="project" value="UniProtKB-KW"/>
</dbReference>
<dbReference type="FunFam" id="1.10.1660.20:FF:000001">
    <property type="entry name" value="Excisionase"/>
    <property type="match status" value="1"/>
</dbReference>
<dbReference type="Gene3D" id="1.10.1660.20">
    <property type="match status" value="1"/>
</dbReference>
<dbReference type="InterPro" id="IPR009061">
    <property type="entry name" value="DNA-bd_dom_put_sf"/>
</dbReference>
<dbReference type="InterPro" id="IPR012884">
    <property type="entry name" value="Excisionase-like"/>
</dbReference>
<dbReference type="InterPro" id="IPR038137">
    <property type="entry name" value="Excisionase-like_sf"/>
</dbReference>
<dbReference type="Pfam" id="PF07825">
    <property type="entry name" value="Exc"/>
    <property type="match status" value="1"/>
</dbReference>
<dbReference type="SUPFAM" id="SSF46955">
    <property type="entry name" value="Putative DNA-binding domain"/>
    <property type="match status" value="1"/>
</dbReference>
<name>VXIS_BP434</name>
<proteinExistence type="predicted"/>
<accession>P68926</accession>
<accession>P11683</accession>
<accession>P16408</accession>
<feature type="chain" id="PRO_0000077711" description="Excisionase">
    <location>
        <begin position="1"/>
        <end position="72"/>
    </location>
</feature>
<keyword id="KW-0233">DNA recombination</keyword>
<keyword id="KW-0238">DNA-binding</keyword>
<keyword id="KW-1250">Viral genome excision</keyword>
<comment type="function">
    <text>Excisionase and integrase are necessary for the excision of prophage from the host genome by site-specific recombination at the att site.</text>
</comment>
<gene>
    <name type="primary">xis</name>
</gene>
<organismHost>
    <name type="scientific">Escherichia coli</name>
    <dbReference type="NCBI Taxonomy" id="562"/>
</organismHost>